<protein>
    <recommendedName>
        <fullName evidence="1">Transcription antitermination protein RfaH</fullName>
    </recommendedName>
</protein>
<organism>
    <name type="scientific">Escherichia coli O6:H1 (strain CFT073 / ATCC 700928 / UPEC)</name>
    <dbReference type="NCBI Taxonomy" id="199310"/>
    <lineage>
        <taxon>Bacteria</taxon>
        <taxon>Pseudomonadati</taxon>
        <taxon>Pseudomonadota</taxon>
        <taxon>Gammaproteobacteria</taxon>
        <taxon>Enterobacterales</taxon>
        <taxon>Enterobacteriaceae</taxon>
        <taxon>Escherichia</taxon>
    </lineage>
</organism>
<evidence type="ECO:0000255" key="1">
    <source>
        <dbReference type="HAMAP-Rule" id="MF_00951"/>
    </source>
</evidence>
<evidence type="ECO:0000269" key="2">
    <source>
    </source>
</evidence>
<reference key="1">
    <citation type="journal article" date="2002" name="Proc. Natl. Acad. Sci. U.S.A.">
        <title>Extensive mosaic structure revealed by the complete genome sequence of uropathogenic Escherichia coli.</title>
        <authorList>
            <person name="Welch R.A."/>
            <person name="Burland V."/>
            <person name="Plunkett G. III"/>
            <person name="Redford P."/>
            <person name="Roesch P."/>
            <person name="Rasko D."/>
            <person name="Buckles E.L."/>
            <person name="Liou S.-R."/>
            <person name="Boutin A."/>
            <person name="Hackett J."/>
            <person name="Stroud D."/>
            <person name="Mayhew G.F."/>
            <person name="Rose D.J."/>
            <person name="Zhou S."/>
            <person name="Schwartz D.C."/>
            <person name="Perna N.T."/>
            <person name="Mobley H.L.T."/>
            <person name="Donnenberg M.S."/>
            <person name="Blattner F.R."/>
        </authorList>
    </citation>
    <scope>NUCLEOTIDE SEQUENCE [LARGE SCALE GENOMIC DNA]</scope>
    <source>
        <strain>CFT073 / ATCC 700928 / UPEC</strain>
    </source>
</reference>
<reference key="2">
    <citation type="journal article" date="2005" name="FEMS Microbiol. Lett.">
        <title>Transcriptional regulation through RfaH contributes to intestinal colonization by Escherichia coli.</title>
        <authorList>
            <person name="Nagy G."/>
            <person name="Dobrindt U."/>
            <person name="Grozdanov L."/>
            <person name="Hacker J."/>
            <person name="Emody L."/>
        </authorList>
    </citation>
    <scope>FUNCTION IN VIRULENCE</scope>
    <source>
        <strain>O6:K5:H1 / Nissle 1917</strain>
    </source>
</reference>
<proteinExistence type="evidence at protein level"/>
<keyword id="KW-0238">DNA-binding</keyword>
<keyword id="KW-1185">Reference proteome</keyword>
<keyword id="KW-0804">Transcription</keyword>
<keyword id="KW-0889">Transcription antitermination</keyword>
<keyword id="KW-0805">Transcription regulation</keyword>
<gene>
    <name evidence="1" type="primary">rfaH</name>
    <name type="ordered locus">c4789</name>
</gene>
<comment type="function">
    <text evidence="1 2">Enhances distal genes transcription elongation in a specialized subset of operons that encode extracytoplasmic components. RfaH is recruited into a multi-component RNA polymerase complex by the ops element, which is a short conserved DNA sequence located downstream of the main promoter of these operons. Once bound, RfaH suppresses pausing and inhibits Rho-dependent and intrinsic termination at a subset of sites. Termination signals are bypassed, which allows complete synthesis of long RNA chains (By similarity). Contributes to intestinal colonization via regulation of the lipopolysaccharide core synthesis.</text>
</comment>
<comment type="subunit">
    <text evidence="1">Interacts with both the nontemplate DNA and the RNA polymerase (RNAP).</text>
</comment>
<comment type="similarity">
    <text evidence="1">Belongs to the RfaH family.</text>
</comment>
<sequence>MQSWYLLYCKRGQLQRAQEHLERQAVNCLAPMITLEKIVRGKRTAVSEPLFPNYLFVEFDPEVIHTTTINATRGVSHFVRFGASPAIVPSAVIHQLSVYKPKDIVDPSTPYPGDKVIITEGAFEGFQAIFTEPDGEARSMLLLNLINKEIKHSVKNTEFRKL</sequence>
<accession>Q8FBI4</accession>
<feature type="chain" id="PRO_0000422182" description="Transcription antitermination protein RfaH">
    <location>
        <begin position="1"/>
        <end position="162"/>
    </location>
</feature>
<name>RFAH_ECOL6</name>
<dbReference type="EMBL" id="AE014075">
    <property type="protein sequence ID" value="AAN83222.1"/>
    <property type="molecule type" value="Genomic_DNA"/>
</dbReference>
<dbReference type="RefSeq" id="WP_001192400.1">
    <property type="nucleotide sequence ID" value="NZ_CP051263.1"/>
</dbReference>
<dbReference type="BMRB" id="Q8FBI4"/>
<dbReference type="SMR" id="Q8FBI4"/>
<dbReference type="STRING" id="199310.c4789"/>
<dbReference type="KEGG" id="ecc:c4789"/>
<dbReference type="eggNOG" id="COG0250">
    <property type="taxonomic scope" value="Bacteria"/>
</dbReference>
<dbReference type="HOGENOM" id="CLU_067287_5_0_6"/>
<dbReference type="BioCyc" id="ECOL199310:C4789-MONOMER"/>
<dbReference type="Proteomes" id="UP000001410">
    <property type="component" value="Chromosome"/>
</dbReference>
<dbReference type="GO" id="GO:0005829">
    <property type="term" value="C:cytosol"/>
    <property type="evidence" value="ECO:0007669"/>
    <property type="project" value="TreeGrafter"/>
</dbReference>
<dbReference type="GO" id="GO:0003677">
    <property type="term" value="F:DNA binding"/>
    <property type="evidence" value="ECO:0007669"/>
    <property type="project" value="UniProtKB-UniRule"/>
</dbReference>
<dbReference type="GO" id="GO:0001073">
    <property type="term" value="F:transcription antitermination factor activity, DNA binding"/>
    <property type="evidence" value="ECO:0007669"/>
    <property type="project" value="UniProtKB-UniRule"/>
</dbReference>
<dbReference type="GO" id="GO:0140673">
    <property type="term" value="P:transcription elongation-coupled chromatin remodeling"/>
    <property type="evidence" value="ECO:0007669"/>
    <property type="project" value="InterPro"/>
</dbReference>
<dbReference type="CDD" id="cd09892">
    <property type="entry name" value="NGN_SP_RfaH"/>
    <property type="match status" value="1"/>
</dbReference>
<dbReference type="FunFam" id="3.30.70.940:FF:000004">
    <property type="entry name" value="Transcription antitermination protein RfaH"/>
    <property type="match status" value="1"/>
</dbReference>
<dbReference type="Gene3D" id="3.30.70.940">
    <property type="entry name" value="NusG, N-terminal domain"/>
    <property type="match status" value="1"/>
</dbReference>
<dbReference type="HAMAP" id="MF_00951">
    <property type="entry name" value="RfaH"/>
    <property type="match status" value="1"/>
</dbReference>
<dbReference type="InterPro" id="IPR006645">
    <property type="entry name" value="NGN-like_dom"/>
</dbReference>
<dbReference type="InterPro" id="IPR036735">
    <property type="entry name" value="NGN_dom_sf"/>
</dbReference>
<dbReference type="InterPro" id="IPR043425">
    <property type="entry name" value="NusG-like"/>
</dbReference>
<dbReference type="InterPro" id="IPR010215">
    <property type="entry name" value="Transcription_antiterm_RfaH"/>
</dbReference>
<dbReference type="NCBIfam" id="NF006534">
    <property type="entry name" value="PRK09014.1"/>
    <property type="match status" value="1"/>
</dbReference>
<dbReference type="NCBIfam" id="TIGR01955">
    <property type="entry name" value="RfaH"/>
    <property type="match status" value="1"/>
</dbReference>
<dbReference type="PANTHER" id="PTHR30265">
    <property type="entry name" value="RHO-INTERACTING TRANSCRIPTION TERMINATION FACTOR NUSG"/>
    <property type="match status" value="1"/>
</dbReference>
<dbReference type="PANTHER" id="PTHR30265:SF7">
    <property type="entry name" value="TRANSCRIPTION ANTITERMINATION PROTEIN RFAH"/>
    <property type="match status" value="1"/>
</dbReference>
<dbReference type="Pfam" id="PF02357">
    <property type="entry name" value="NusG"/>
    <property type="match status" value="1"/>
</dbReference>
<dbReference type="SMART" id="SM00738">
    <property type="entry name" value="NGN"/>
    <property type="match status" value="1"/>
</dbReference>
<dbReference type="SUPFAM" id="SSF82679">
    <property type="entry name" value="N-utilization substance G protein NusG, N-terminal domain"/>
    <property type="match status" value="1"/>
</dbReference>